<comment type="function">
    <text evidence="1 2">Enables the recognition and targeting of unfolded and aggregated proteins to the ClpC protease or to other proteins involved in proteolysis. Also involved in Spx degradation by ClpC (By similarity). Acts negatively in the development of competence by binding ComK and recruiting it to the ClpCP protease. When overexpressed, inhibits sporulation.</text>
</comment>
<comment type="subunit">
    <text evidence="1">Homodimer.</text>
</comment>
<comment type="domain">
    <text>The N-terminal domain has binding sites for ComK and probably for unfolded/aggregated proteins; the C-terminal domain interacts with ClpC.</text>
</comment>
<comment type="similarity">
    <text evidence="3">Belongs to the MecA family.</text>
</comment>
<name>MECA2_BACSU</name>
<sequence>MRLERLNYNKIKIFLTLDDLTDRGLTKEDLWKDSFKVHQLFKDMMNEANTELGFEANGPIAVEVYSLQAQGMVVIVTKNQDADSEDDEYDDDYIEMQVKLDESADIIYQFHSFEDIIQLSESLQRIGITGGTVYHYDGQYFLSLEDLGSHTAEGVVAVLAEYGNPTTLTIYRLQEYGKLIMDGNAVETIQTHFS</sequence>
<proteinExistence type="evidence at protein level"/>
<gene>
    <name type="primary">mecB</name>
    <name type="synonym">ypbH</name>
    <name type="ordered locus">BSU22970</name>
</gene>
<dbReference type="EMBL" id="L47648">
    <property type="protein sequence ID" value="AAC83952.1"/>
    <property type="molecule type" value="Genomic_DNA"/>
</dbReference>
<dbReference type="EMBL" id="AL009126">
    <property type="protein sequence ID" value="CAB14213.1"/>
    <property type="molecule type" value="Genomic_DNA"/>
</dbReference>
<dbReference type="PIR" id="C69933">
    <property type="entry name" value="C69933"/>
</dbReference>
<dbReference type="RefSeq" id="NP_390178.1">
    <property type="nucleotide sequence ID" value="NC_000964.3"/>
</dbReference>
<dbReference type="RefSeq" id="WP_003230533.1">
    <property type="nucleotide sequence ID" value="NZ_OZ025638.1"/>
</dbReference>
<dbReference type="PDB" id="3JTN">
    <property type="method" value="X-ray"/>
    <property type="resolution" value="2.09 A"/>
    <property type="chains" value="A/B=104-194"/>
</dbReference>
<dbReference type="PDB" id="3JTO">
    <property type="method" value="X-ray"/>
    <property type="resolution" value="2.40 A"/>
    <property type="chains" value="A/B/C/D/E/F=101-194"/>
</dbReference>
<dbReference type="PDBsum" id="3JTN"/>
<dbReference type="PDBsum" id="3JTO"/>
<dbReference type="SMR" id="P50734"/>
<dbReference type="FunCoup" id="P50734">
    <property type="interactions" value="26"/>
</dbReference>
<dbReference type="STRING" id="224308.BSU22970"/>
<dbReference type="PaxDb" id="224308-BSU22970"/>
<dbReference type="EnsemblBacteria" id="CAB14213">
    <property type="protein sequence ID" value="CAB14213"/>
    <property type="gene ID" value="BSU_22970"/>
</dbReference>
<dbReference type="GeneID" id="938980"/>
<dbReference type="KEGG" id="bsu:BSU22970"/>
<dbReference type="PATRIC" id="fig|224308.179.peg.2504"/>
<dbReference type="eggNOG" id="COG4862">
    <property type="taxonomic scope" value="Bacteria"/>
</dbReference>
<dbReference type="InParanoid" id="P50734"/>
<dbReference type="OrthoDB" id="2085234at2"/>
<dbReference type="PhylomeDB" id="P50734"/>
<dbReference type="BioCyc" id="BSUB:BSU22970-MONOMER"/>
<dbReference type="EvolutionaryTrace" id="P50734"/>
<dbReference type="Proteomes" id="UP000001570">
    <property type="component" value="Chromosome"/>
</dbReference>
<dbReference type="GO" id="GO:0030674">
    <property type="term" value="F:protein-macromolecule adaptor activity"/>
    <property type="evidence" value="ECO:0007669"/>
    <property type="project" value="UniProtKB-UniRule"/>
</dbReference>
<dbReference type="GO" id="GO:0030420">
    <property type="term" value="P:establishment of competence for transformation"/>
    <property type="evidence" value="ECO:0007669"/>
    <property type="project" value="UniProtKB-KW"/>
</dbReference>
<dbReference type="GO" id="GO:0045808">
    <property type="term" value="P:negative regulation of establishment of competence for transformation"/>
    <property type="evidence" value="ECO:0007669"/>
    <property type="project" value="UniProtKB-UniRule"/>
</dbReference>
<dbReference type="GO" id="GO:0042174">
    <property type="term" value="P:negative regulation of sporulation resulting in formation of a cellular spore"/>
    <property type="evidence" value="ECO:0007669"/>
    <property type="project" value="UniProtKB-UniRule"/>
</dbReference>
<dbReference type="GO" id="GO:0030435">
    <property type="term" value="P:sporulation resulting in formation of a cellular spore"/>
    <property type="evidence" value="ECO:0007669"/>
    <property type="project" value="UniProtKB-KW"/>
</dbReference>
<dbReference type="Gene3D" id="3.30.70.1950">
    <property type="match status" value="1"/>
</dbReference>
<dbReference type="HAMAP" id="MF_01124">
    <property type="entry name" value="MecA"/>
    <property type="match status" value="1"/>
</dbReference>
<dbReference type="InterPro" id="IPR038471">
    <property type="entry name" value="MecA_C_sf"/>
</dbReference>
<dbReference type="InterPro" id="IPR008681">
    <property type="entry name" value="Neg-reg_MecA"/>
</dbReference>
<dbReference type="NCBIfam" id="NF002781">
    <property type="entry name" value="PRK02899.1"/>
    <property type="match status" value="1"/>
</dbReference>
<dbReference type="PANTHER" id="PTHR39161">
    <property type="entry name" value="ADAPTER PROTEIN MECA"/>
    <property type="match status" value="1"/>
</dbReference>
<dbReference type="PANTHER" id="PTHR39161:SF2">
    <property type="entry name" value="ADAPTER PROTEIN MECA 2"/>
    <property type="match status" value="1"/>
</dbReference>
<dbReference type="Pfam" id="PF05389">
    <property type="entry name" value="MecA"/>
    <property type="match status" value="2"/>
</dbReference>
<dbReference type="PIRSF" id="PIRSF029008">
    <property type="entry name" value="MecA"/>
    <property type="match status" value="1"/>
</dbReference>
<feature type="chain" id="PRO_0000212268" description="Adapter protein MecA 2">
    <location>
        <begin position="1"/>
        <end position="194"/>
    </location>
</feature>
<feature type="strand" evidence="4">
    <location>
        <begin position="106"/>
        <end position="112"/>
    </location>
</feature>
<feature type="helix" evidence="4">
    <location>
        <begin position="113"/>
        <end position="125"/>
    </location>
</feature>
<feature type="strand" evidence="4">
    <location>
        <begin position="132"/>
        <end position="136"/>
    </location>
</feature>
<feature type="strand" evidence="4">
    <location>
        <begin position="139"/>
        <end position="144"/>
    </location>
</feature>
<feature type="helix" evidence="4">
    <location>
        <begin position="152"/>
        <end position="162"/>
    </location>
</feature>
<feature type="helix" evidence="4">
    <location>
        <begin position="170"/>
        <end position="176"/>
    </location>
</feature>
<feature type="strand" evidence="4">
    <location>
        <begin position="177"/>
        <end position="183"/>
    </location>
</feature>
<feature type="helix" evidence="4">
    <location>
        <begin position="185"/>
        <end position="190"/>
    </location>
</feature>
<organism>
    <name type="scientific">Bacillus subtilis (strain 168)</name>
    <dbReference type="NCBI Taxonomy" id="224308"/>
    <lineage>
        <taxon>Bacteria</taxon>
        <taxon>Bacillati</taxon>
        <taxon>Bacillota</taxon>
        <taxon>Bacilli</taxon>
        <taxon>Bacillales</taxon>
        <taxon>Bacillaceae</taxon>
        <taxon>Bacillus</taxon>
    </lineage>
</organism>
<evidence type="ECO:0000250" key="1"/>
<evidence type="ECO:0000269" key="2">
    <source>
    </source>
</evidence>
<evidence type="ECO:0000305" key="3"/>
<evidence type="ECO:0007829" key="4">
    <source>
        <dbReference type="PDB" id="3JTN"/>
    </source>
</evidence>
<accession>P50734</accession>
<reference key="1">
    <citation type="journal article" date="1996" name="Microbiology">
        <title>Sequence analysis of the Bacillus subtilis chromosome region between the serA and kdg loci cloned in a yeast artificial chromosome.</title>
        <authorList>
            <person name="Sorokin A.V."/>
            <person name="Azevedo V."/>
            <person name="Zumstein E."/>
            <person name="Galleron N."/>
            <person name="Ehrlich S.D."/>
            <person name="Serror P."/>
        </authorList>
    </citation>
    <scope>NUCLEOTIDE SEQUENCE [GENOMIC DNA]</scope>
    <source>
        <strain>168 / Marburg / ATCC 6051 / DSM 10 / JCM 1465 / NBRC 13719 / NCIMB 3610 / NRRL NRS-744 / VKM B-501</strain>
    </source>
</reference>
<reference key="2">
    <citation type="journal article" date="1997" name="Nature">
        <title>The complete genome sequence of the Gram-positive bacterium Bacillus subtilis.</title>
        <authorList>
            <person name="Kunst F."/>
            <person name="Ogasawara N."/>
            <person name="Moszer I."/>
            <person name="Albertini A.M."/>
            <person name="Alloni G."/>
            <person name="Azevedo V."/>
            <person name="Bertero M.G."/>
            <person name="Bessieres P."/>
            <person name="Bolotin A."/>
            <person name="Borchert S."/>
            <person name="Borriss R."/>
            <person name="Boursier L."/>
            <person name="Brans A."/>
            <person name="Braun M."/>
            <person name="Brignell S.C."/>
            <person name="Bron S."/>
            <person name="Brouillet S."/>
            <person name="Bruschi C.V."/>
            <person name="Caldwell B."/>
            <person name="Capuano V."/>
            <person name="Carter N.M."/>
            <person name="Choi S.-K."/>
            <person name="Codani J.-J."/>
            <person name="Connerton I.F."/>
            <person name="Cummings N.J."/>
            <person name="Daniel R.A."/>
            <person name="Denizot F."/>
            <person name="Devine K.M."/>
            <person name="Duesterhoeft A."/>
            <person name="Ehrlich S.D."/>
            <person name="Emmerson P.T."/>
            <person name="Entian K.-D."/>
            <person name="Errington J."/>
            <person name="Fabret C."/>
            <person name="Ferrari E."/>
            <person name="Foulger D."/>
            <person name="Fritz C."/>
            <person name="Fujita M."/>
            <person name="Fujita Y."/>
            <person name="Fuma S."/>
            <person name="Galizzi A."/>
            <person name="Galleron N."/>
            <person name="Ghim S.-Y."/>
            <person name="Glaser P."/>
            <person name="Goffeau A."/>
            <person name="Golightly E.J."/>
            <person name="Grandi G."/>
            <person name="Guiseppi G."/>
            <person name="Guy B.J."/>
            <person name="Haga K."/>
            <person name="Haiech J."/>
            <person name="Harwood C.R."/>
            <person name="Henaut A."/>
            <person name="Hilbert H."/>
            <person name="Holsappel S."/>
            <person name="Hosono S."/>
            <person name="Hullo M.-F."/>
            <person name="Itaya M."/>
            <person name="Jones L.-M."/>
            <person name="Joris B."/>
            <person name="Karamata D."/>
            <person name="Kasahara Y."/>
            <person name="Klaerr-Blanchard M."/>
            <person name="Klein C."/>
            <person name="Kobayashi Y."/>
            <person name="Koetter P."/>
            <person name="Koningstein G."/>
            <person name="Krogh S."/>
            <person name="Kumano M."/>
            <person name="Kurita K."/>
            <person name="Lapidus A."/>
            <person name="Lardinois S."/>
            <person name="Lauber J."/>
            <person name="Lazarevic V."/>
            <person name="Lee S.-M."/>
            <person name="Levine A."/>
            <person name="Liu H."/>
            <person name="Masuda S."/>
            <person name="Mauel C."/>
            <person name="Medigue C."/>
            <person name="Medina N."/>
            <person name="Mellado R.P."/>
            <person name="Mizuno M."/>
            <person name="Moestl D."/>
            <person name="Nakai S."/>
            <person name="Noback M."/>
            <person name="Noone D."/>
            <person name="O'Reilly M."/>
            <person name="Ogawa K."/>
            <person name="Ogiwara A."/>
            <person name="Oudega B."/>
            <person name="Park S.-H."/>
            <person name="Parro V."/>
            <person name="Pohl T.M."/>
            <person name="Portetelle D."/>
            <person name="Porwollik S."/>
            <person name="Prescott A.M."/>
            <person name="Presecan E."/>
            <person name="Pujic P."/>
            <person name="Purnelle B."/>
            <person name="Rapoport G."/>
            <person name="Rey M."/>
            <person name="Reynolds S."/>
            <person name="Rieger M."/>
            <person name="Rivolta C."/>
            <person name="Rocha E."/>
            <person name="Roche B."/>
            <person name="Rose M."/>
            <person name="Sadaie Y."/>
            <person name="Sato T."/>
            <person name="Scanlan E."/>
            <person name="Schleich S."/>
            <person name="Schroeter R."/>
            <person name="Scoffone F."/>
            <person name="Sekiguchi J."/>
            <person name="Sekowska A."/>
            <person name="Seror S.J."/>
            <person name="Serror P."/>
            <person name="Shin B.-S."/>
            <person name="Soldo B."/>
            <person name="Sorokin A."/>
            <person name="Tacconi E."/>
            <person name="Takagi T."/>
            <person name="Takahashi H."/>
            <person name="Takemaru K."/>
            <person name="Takeuchi M."/>
            <person name="Tamakoshi A."/>
            <person name="Tanaka T."/>
            <person name="Terpstra P."/>
            <person name="Tognoni A."/>
            <person name="Tosato V."/>
            <person name="Uchiyama S."/>
            <person name="Vandenbol M."/>
            <person name="Vannier F."/>
            <person name="Vassarotti A."/>
            <person name="Viari A."/>
            <person name="Wambutt R."/>
            <person name="Wedler E."/>
            <person name="Wedler H."/>
            <person name="Weitzenegger T."/>
            <person name="Winters P."/>
            <person name="Wipat A."/>
            <person name="Yamamoto H."/>
            <person name="Yamane K."/>
            <person name="Yasumoto K."/>
            <person name="Yata K."/>
            <person name="Yoshida K."/>
            <person name="Yoshikawa H.-F."/>
            <person name="Zumstein E."/>
            <person name="Yoshikawa H."/>
            <person name="Danchin A."/>
        </authorList>
    </citation>
    <scope>NUCLEOTIDE SEQUENCE [LARGE SCALE GENOMIC DNA]</scope>
    <source>
        <strain>168</strain>
    </source>
</reference>
<reference key="3">
    <citation type="journal article" date="2002" name="J. Bacteriol.">
        <title>A MecA paralog, YpbH, binds ClpC, affecting both competence and sporulation.</title>
        <authorList>
            <person name="Persuh M."/>
            <person name="Mandic-Mulec I."/>
            <person name="Dubnau D."/>
        </authorList>
    </citation>
    <scope>FUNCTION</scope>
</reference>
<keyword id="KW-0002">3D-structure</keyword>
<keyword id="KW-0178">Competence</keyword>
<keyword id="KW-1185">Reference proteome</keyword>
<keyword id="KW-0749">Sporulation</keyword>
<protein>
    <recommendedName>
        <fullName>Adapter protein MecA 2</fullName>
    </recommendedName>
</protein>